<organism>
    <name type="scientific">Ralstonia pickettii (strain 12J)</name>
    <dbReference type="NCBI Taxonomy" id="402626"/>
    <lineage>
        <taxon>Bacteria</taxon>
        <taxon>Pseudomonadati</taxon>
        <taxon>Pseudomonadota</taxon>
        <taxon>Betaproteobacteria</taxon>
        <taxon>Burkholderiales</taxon>
        <taxon>Burkholderiaceae</taxon>
        <taxon>Ralstonia</taxon>
    </lineage>
</organism>
<proteinExistence type="inferred from homology"/>
<comment type="similarity">
    <text evidence="1">Belongs to the bacterial ribosomal protein bL33 family.</text>
</comment>
<name>RL33_RALPJ</name>
<protein>
    <recommendedName>
        <fullName evidence="1">Large ribosomal subunit protein bL33</fullName>
    </recommendedName>
    <alternativeName>
        <fullName evidence="3">50S ribosomal protein L33</fullName>
    </alternativeName>
</protein>
<gene>
    <name evidence="1" type="primary">rpmG</name>
    <name type="ordered locus">Rpic_2714</name>
</gene>
<accession>B2UAP2</accession>
<feature type="chain" id="PRO_1000115156" description="Large ribosomal subunit protein bL33">
    <location>
        <begin position="1"/>
        <end position="56"/>
    </location>
</feature>
<feature type="region of interest" description="Disordered" evidence="2">
    <location>
        <begin position="1"/>
        <end position="30"/>
    </location>
</feature>
<feature type="compositionally biased region" description="Basic and acidic residues" evidence="2">
    <location>
        <begin position="1"/>
        <end position="12"/>
    </location>
</feature>
<feature type="compositionally biased region" description="Polar residues" evidence="2">
    <location>
        <begin position="15"/>
        <end position="25"/>
    </location>
</feature>
<reference key="1">
    <citation type="submission" date="2008-05" db="EMBL/GenBank/DDBJ databases">
        <title>Complete sequence of chromosome 1 of Ralstonia pickettii 12J.</title>
        <authorList>
            <person name="Lucas S."/>
            <person name="Copeland A."/>
            <person name="Lapidus A."/>
            <person name="Glavina del Rio T."/>
            <person name="Dalin E."/>
            <person name="Tice H."/>
            <person name="Bruce D."/>
            <person name="Goodwin L."/>
            <person name="Pitluck S."/>
            <person name="Meincke L."/>
            <person name="Brettin T."/>
            <person name="Detter J.C."/>
            <person name="Han C."/>
            <person name="Kuske C.R."/>
            <person name="Schmutz J."/>
            <person name="Larimer F."/>
            <person name="Land M."/>
            <person name="Hauser L."/>
            <person name="Kyrpides N."/>
            <person name="Mikhailova N."/>
            <person name="Marsh T."/>
            <person name="Richardson P."/>
        </authorList>
    </citation>
    <scope>NUCLEOTIDE SEQUENCE [LARGE SCALE GENOMIC DNA]</scope>
    <source>
        <strain>12J</strain>
    </source>
</reference>
<sequence>MASKGGRDKIKLESTAGTGHFYTTTKNKRTKPEKMEIMKFDPVARKHVAYKETKIK</sequence>
<evidence type="ECO:0000255" key="1">
    <source>
        <dbReference type="HAMAP-Rule" id="MF_00294"/>
    </source>
</evidence>
<evidence type="ECO:0000256" key="2">
    <source>
        <dbReference type="SAM" id="MobiDB-lite"/>
    </source>
</evidence>
<evidence type="ECO:0000305" key="3"/>
<keyword id="KW-0687">Ribonucleoprotein</keyword>
<keyword id="KW-0689">Ribosomal protein</keyword>
<dbReference type="EMBL" id="CP001068">
    <property type="protein sequence ID" value="ACD27839.1"/>
    <property type="molecule type" value="Genomic_DNA"/>
</dbReference>
<dbReference type="SMR" id="B2UAP2"/>
<dbReference type="STRING" id="402626.Rpic_2714"/>
<dbReference type="KEGG" id="rpi:Rpic_2714"/>
<dbReference type="eggNOG" id="COG0267">
    <property type="taxonomic scope" value="Bacteria"/>
</dbReference>
<dbReference type="HOGENOM" id="CLU_190949_1_1_4"/>
<dbReference type="GO" id="GO:0022625">
    <property type="term" value="C:cytosolic large ribosomal subunit"/>
    <property type="evidence" value="ECO:0007669"/>
    <property type="project" value="TreeGrafter"/>
</dbReference>
<dbReference type="GO" id="GO:0003735">
    <property type="term" value="F:structural constituent of ribosome"/>
    <property type="evidence" value="ECO:0007669"/>
    <property type="project" value="InterPro"/>
</dbReference>
<dbReference type="GO" id="GO:0006412">
    <property type="term" value="P:translation"/>
    <property type="evidence" value="ECO:0007669"/>
    <property type="project" value="UniProtKB-UniRule"/>
</dbReference>
<dbReference type="FunFam" id="2.20.28.120:FF:000001">
    <property type="entry name" value="50S ribosomal protein L33"/>
    <property type="match status" value="1"/>
</dbReference>
<dbReference type="Gene3D" id="2.20.28.120">
    <property type="entry name" value="Ribosomal protein L33"/>
    <property type="match status" value="1"/>
</dbReference>
<dbReference type="HAMAP" id="MF_00294">
    <property type="entry name" value="Ribosomal_bL33"/>
    <property type="match status" value="1"/>
</dbReference>
<dbReference type="InterPro" id="IPR001705">
    <property type="entry name" value="Ribosomal_bL33"/>
</dbReference>
<dbReference type="InterPro" id="IPR018264">
    <property type="entry name" value="Ribosomal_bL33_CS"/>
</dbReference>
<dbReference type="InterPro" id="IPR038584">
    <property type="entry name" value="Ribosomal_bL33_sf"/>
</dbReference>
<dbReference type="InterPro" id="IPR011332">
    <property type="entry name" value="Ribosomal_zn-bd"/>
</dbReference>
<dbReference type="NCBIfam" id="NF001860">
    <property type="entry name" value="PRK00595.1"/>
    <property type="match status" value="1"/>
</dbReference>
<dbReference type="NCBIfam" id="TIGR01023">
    <property type="entry name" value="rpmG_bact"/>
    <property type="match status" value="1"/>
</dbReference>
<dbReference type="PANTHER" id="PTHR15238">
    <property type="entry name" value="54S RIBOSOMAL PROTEIN L39, MITOCHONDRIAL"/>
    <property type="match status" value="1"/>
</dbReference>
<dbReference type="PANTHER" id="PTHR15238:SF1">
    <property type="entry name" value="LARGE RIBOSOMAL SUBUNIT PROTEIN BL33M"/>
    <property type="match status" value="1"/>
</dbReference>
<dbReference type="Pfam" id="PF00471">
    <property type="entry name" value="Ribosomal_L33"/>
    <property type="match status" value="1"/>
</dbReference>
<dbReference type="SUPFAM" id="SSF57829">
    <property type="entry name" value="Zn-binding ribosomal proteins"/>
    <property type="match status" value="1"/>
</dbReference>
<dbReference type="PROSITE" id="PS00582">
    <property type="entry name" value="RIBOSOMAL_L33"/>
    <property type="match status" value="1"/>
</dbReference>